<gene>
    <name evidence="1" type="primary">rbfA</name>
    <name type="ordered locus">PLES_51281</name>
</gene>
<comment type="function">
    <text evidence="1">One of several proteins that assist in the late maturation steps of the functional core of the 30S ribosomal subunit. Associates with free 30S ribosomal subunits (but not with 30S subunits that are part of 70S ribosomes or polysomes). Required for efficient processing of 16S rRNA. May interact with the 5'-terminal helix region of 16S rRNA.</text>
</comment>
<comment type="subunit">
    <text evidence="1">Monomer. Binds 30S ribosomal subunits, but not 50S ribosomal subunits or 70S ribosomes.</text>
</comment>
<comment type="subcellular location">
    <subcellularLocation>
        <location evidence="1">Cytoplasm</location>
    </subcellularLocation>
</comment>
<comment type="similarity">
    <text evidence="1">Belongs to the RbfA family.</text>
</comment>
<accession>B7V1F5</accession>
<protein>
    <recommendedName>
        <fullName evidence="1">Ribosome-binding factor A</fullName>
    </recommendedName>
</protein>
<dbReference type="EMBL" id="FM209186">
    <property type="protein sequence ID" value="CAW29882.1"/>
    <property type="molecule type" value="Genomic_DNA"/>
</dbReference>
<dbReference type="RefSeq" id="WP_003100519.1">
    <property type="nucleotide sequence ID" value="NC_011770.1"/>
</dbReference>
<dbReference type="SMR" id="B7V1F5"/>
<dbReference type="KEGG" id="pag:PLES_51281"/>
<dbReference type="HOGENOM" id="CLU_089475_5_0_6"/>
<dbReference type="GO" id="GO:0005829">
    <property type="term" value="C:cytosol"/>
    <property type="evidence" value="ECO:0007669"/>
    <property type="project" value="TreeGrafter"/>
</dbReference>
<dbReference type="GO" id="GO:0043024">
    <property type="term" value="F:ribosomal small subunit binding"/>
    <property type="evidence" value="ECO:0007669"/>
    <property type="project" value="TreeGrafter"/>
</dbReference>
<dbReference type="GO" id="GO:0030490">
    <property type="term" value="P:maturation of SSU-rRNA"/>
    <property type="evidence" value="ECO:0007669"/>
    <property type="project" value="UniProtKB-UniRule"/>
</dbReference>
<dbReference type="FunFam" id="3.30.300.20:FF:000029">
    <property type="entry name" value="Ribosome-binding factor A"/>
    <property type="match status" value="1"/>
</dbReference>
<dbReference type="Gene3D" id="3.30.300.20">
    <property type="match status" value="1"/>
</dbReference>
<dbReference type="HAMAP" id="MF_00003">
    <property type="entry name" value="RbfA"/>
    <property type="match status" value="1"/>
</dbReference>
<dbReference type="InterPro" id="IPR015946">
    <property type="entry name" value="KH_dom-like_a/b"/>
</dbReference>
<dbReference type="InterPro" id="IPR000238">
    <property type="entry name" value="RbfA"/>
</dbReference>
<dbReference type="InterPro" id="IPR023799">
    <property type="entry name" value="RbfA_dom_sf"/>
</dbReference>
<dbReference type="InterPro" id="IPR020053">
    <property type="entry name" value="Ribosome-bd_factorA_CS"/>
</dbReference>
<dbReference type="NCBIfam" id="TIGR00082">
    <property type="entry name" value="rbfA"/>
    <property type="match status" value="1"/>
</dbReference>
<dbReference type="PANTHER" id="PTHR33515">
    <property type="entry name" value="RIBOSOME-BINDING FACTOR A, CHLOROPLASTIC-RELATED"/>
    <property type="match status" value="1"/>
</dbReference>
<dbReference type="PANTHER" id="PTHR33515:SF1">
    <property type="entry name" value="RIBOSOME-BINDING FACTOR A, CHLOROPLASTIC-RELATED"/>
    <property type="match status" value="1"/>
</dbReference>
<dbReference type="Pfam" id="PF02033">
    <property type="entry name" value="RBFA"/>
    <property type="match status" value="1"/>
</dbReference>
<dbReference type="SUPFAM" id="SSF89919">
    <property type="entry name" value="Ribosome-binding factor A, RbfA"/>
    <property type="match status" value="1"/>
</dbReference>
<dbReference type="PROSITE" id="PS01319">
    <property type="entry name" value="RBFA"/>
    <property type="match status" value="1"/>
</dbReference>
<reference key="1">
    <citation type="journal article" date="2009" name="Genome Res.">
        <title>Newly introduced genomic prophage islands are critical determinants of in vivo competitiveness in the Liverpool epidemic strain of Pseudomonas aeruginosa.</title>
        <authorList>
            <person name="Winstanley C."/>
            <person name="Langille M.G.I."/>
            <person name="Fothergill J.L."/>
            <person name="Kukavica-Ibrulj I."/>
            <person name="Paradis-Bleau C."/>
            <person name="Sanschagrin F."/>
            <person name="Thomson N.R."/>
            <person name="Winsor G.L."/>
            <person name="Quail M.A."/>
            <person name="Lennard N."/>
            <person name="Bignell A."/>
            <person name="Clarke L."/>
            <person name="Seeger K."/>
            <person name="Saunders D."/>
            <person name="Harris D."/>
            <person name="Parkhill J."/>
            <person name="Hancock R.E.W."/>
            <person name="Brinkman F.S.L."/>
            <person name="Levesque R.C."/>
        </authorList>
    </citation>
    <scope>NUCLEOTIDE SEQUENCE [LARGE SCALE GENOMIC DNA]</scope>
    <source>
        <strain>LESB58</strain>
    </source>
</reference>
<evidence type="ECO:0000255" key="1">
    <source>
        <dbReference type="HAMAP-Rule" id="MF_00003"/>
    </source>
</evidence>
<name>RBFA_PSEA8</name>
<organism>
    <name type="scientific">Pseudomonas aeruginosa (strain LESB58)</name>
    <dbReference type="NCBI Taxonomy" id="557722"/>
    <lineage>
        <taxon>Bacteria</taxon>
        <taxon>Pseudomonadati</taxon>
        <taxon>Pseudomonadota</taxon>
        <taxon>Gammaproteobacteria</taxon>
        <taxon>Pseudomonadales</taxon>
        <taxon>Pseudomonadaceae</taxon>
        <taxon>Pseudomonas</taxon>
    </lineage>
</organism>
<sequence>MAKDYSRTQRIGDQMQRELAQLIQREIKDPRLGLVTITGVEVSRDVAHAKVFITVMGQDDAGKIALNMEILNDAAGYLRMLLGKSMKLRSVPQLHFHYDESIRRGAELSALIERAVAEDGRRHGDDETED</sequence>
<proteinExistence type="inferred from homology"/>
<feature type="chain" id="PRO_1000193269" description="Ribosome-binding factor A">
    <location>
        <begin position="1"/>
        <end position="130"/>
    </location>
</feature>
<keyword id="KW-0963">Cytoplasm</keyword>
<keyword id="KW-0690">Ribosome biogenesis</keyword>